<keyword id="KW-0066">ATP synthesis</keyword>
<keyword id="KW-1003">Cell membrane</keyword>
<keyword id="KW-0139">CF(1)</keyword>
<keyword id="KW-0375">Hydrogen ion transport</keyword>
<keyword id="KW-0406">Ion transport</keyword>
<keyword id="KW-0472">Membrane</keyword>
<keyword id="KW-1185">Reference proteome</keyword>
<keyword id="KW-0813">Transport</keyword>
<comment type="function">
    <text evidence="1">F(1)F(0) ATP synthase produces ATP from ADP in the presence of a proton or sodium gradient. F-type ATPases consist of two structural domains, F(1) containing the extramembraneous catalytic core and F(0) containing the membrane proton channel, linked together by a central stalk and a peripheral stalk. During catalysis, ATP synthesis in the catalytic domain of F(1) is coupled via a rotary mechanism of the central stalk subunits to proton translocation.</text>
</comment>
<comment type="function">
    <text evidence="1">This protein is part of the stalk that links CF(0) to CF(1). It either transmits conformational changes from CF(0) to CF(1) or is implicated in proton conduction.</text>
</comment>
<comment type="subunit">
    <text evidence="1">F-type ATPases have 2 components, F(1) - the catalytic core - and F(0) - the membrane proton channel. F(1) has five subunits: alpha(3), beta(3), gamma(1), delta(1), epsilon(1). F(0) has three main subunits: a(1), b(2) and c(10-14). The alpha and beta chains form an alternating ring which encloses part of the gamma chain. F(1) is attached to F(0) by a central stalk formed by the gamma and epsilon chains, while a peripheral stalk is formed by the delta and b chains.</text>
</comment>
<comment type="subcellular location">
    <subcellularLocation>
        <location evidence="1">Cell membrane</location>
        <topology evidence="1">Peripheral membrane protein</topology>
    </subcellularLocation>
</comment>
<comment type="similarity">
    <text evidence="1">Belongs to the ATPase delta chain family.</text>
</comment>
<dbReference type="EMBL" id="CP000411">
    <property type="protein sequence ID" value="ABJ56599.1"/>
    <property type="molecule type" value="Genomic_DNA"/>
</dbReference>
<dbReference type="RefSeq" id="WP_002816390.1">
    <property type="nucleotide sequence ID" value="NC_008528.1"/>
</dbReference>
<dbReference type="SMR" id="Q04G23"/>
<dbReference type="STRING" id="203123.OEOE_0662"/>
<dbReference type="GeneID" id="75066261"/>
<dbReference type="KEGG" id="ooe:OEOE_0662"/>
<dbReference type="eggNOG" id="COG0712">
    <property type="taxonomic scope" value="Bacteria"/>
</dbReference>
<dbReference type="HOGENOM" id="CLU_085114_4_0_9"/>
<dbReference type="Proteomes" id="UP000000774">
    <property type="component" value="Chromosome"/>
</dbReference>
<dbReference type="GO" id="GO:0005886">
    <property type="term" value="C:plasma membrane"/>
    <property type="evidence" value="ECO:0007669"/>
    <property type="project" value="UniProtKB-SubCell"/>
</dbReference>
<dbReference type="GO" id="GO:0045259">
    <property type="term" value="C:proton-transporting ATP synthase complex"/>
    <property type="evidence" value="ECO:0007669"/>
    <property type="project" value="UniProtKB-KW"/>
</dbReference>
<dbReference type="GO" id="GO:0046933">
    <property type="term" value="F:proton-transporting ATP synthase activity, rotational mechanism"/>
    <property type="evidence" value="ECO:0007669"/>
    <property type="project" value="UniProtKB-UniRule"/>
</dbReference>
<dbReference type="Gene3D" id="1.10.520.20">
    <property type="entry name" value="N-terminal domain of the delta subunit of the F1F0-ATP synthase"/>
    <property type="match status" value="1"/>
</dbReference>
<dbReference type="HAMAP" id="MF_01416">
    <property type="entry name" value="ATP_synth_delta_bact"/>
    <property type="match status" value="1"/>
</dbReference>
<dbReference type="InterPro" id="IPR026015">
    <property type="entry name" value="ATP_synth_OSCP/delta_N_sf"/>
</dbReference>
<dbReference type="InterPro" id="IPR000711">
    <property type="entry name" value="ATPase_OSCP/dsu"/>
</dbReference>
<dbReference type="NCBIfam" id="TIGR01145">
    <property type="entry name" value="ATP_synt_delta"/>
    <property type="match status" value="1"/>
</dbReference>
<dbReference type="PANTHER" id="PTHR11910">
    <property type="entry name" value="ATP SYNTHASE DELTA CHAIN"/>
    <property type="match status" value="1"/>
</dbReference>
<dbReference type="Pfam" id="PF00213">
    <property type="entry name" value="OSCP"/>
    <property type="match status" value="1"/>
</dbReference>
<dbReference type="PRINTS" id="PR00125">
    <property type="entry name" value="ATPASEDELTA"/>
</dbReference>
<dbReference type="SUPFAM" id="SSF47928">
    <property type="entry name" value="N-terminal domain of the delta subunit of the F1F0-ATP synthase"/>
    <property type="match status" value="1"/>
</dbReference>
<organism>
    <name type="scientific">Oenococcus oeni (strain ATCC BAA-331 / PSU-1)</name>
    <dbReference type="NCBI Taxonomy" id="203123"/>
    <lineage>
        <taxon>Bacteria</taxon>
        <taxon>Bacillati</taxon>
        <taxon>Bacillota</taxon>
        <taxon>Bacilli</taxon>
        <taxon>Lactobacillales</taxon>
        <taxon>Lactobacillaceae</taxon>
        <taxon>Oenococcus</taxon>
    </lineage>
</organism>
<feature type="chain" id="PRO_0000382133" description="ATP synthase subunit delta">
    <location>
        <begin position="1"/>
        <end position="183"/>
    </location>
</feature>
<accession>Q04G23</accession>
<name>ATPD_OENOB</name>
<gene>
    <name evidence="1" type="primary">atpH</name>
    <name type="ordered locus">OEOE_0662</name>
</gene>
<sequence>MAFNENRVINNYAEALMEVSGKQTAKVLSELQVIELVFERNKELAQTLDDVSVSSQQQEAFIGILGKGCSTTTKNFLETLADNRHFSLLEEIVENLDQRVSASNNHSLVIAKTAIPITAEQSKRLSKIAQKKFGYQHVEVKNVVDPNVIAGVILTAGSKTIDGSIKNKLVQLNNHIKQAVGKE</sequence>
<reference key="1">
    <citation type="journal article" date="2006" name="Proc. Natl. Acad. Sci. U.S.A.">
        <title>Comparative genomics of the lactic acid bacteria.</title>
        <authorList>
            <person name="Makarova K.S."/>
            <person name="Slesarev A."/>
            <person name="Wolf Y.I."/>
            <person name="Sorokin A."/>
            <person name="Mirkin B."/>
            <person name="Koonin E.V."/>
            <person name="Pavlov A."/>
            <person name="Pavlova N."/>
            <person name="Karamychev V."/>
            <person name="Polouchine N."/>
            <person name="Shakhova V."/>
            <person name="Grigoriev I."/>
            <person name="Lou Y."/>
            <person name="Rohksar D."/>
            <person name="Lucas S."/>
            <person name="Huang K."/>
            <person name="Goodstein D.M."/>
            <person name="Hawkins T."/>
            <person name="Plengvidhya V."/>
            <person name="Welker D."/>
            <person name="Hughes J."/>
            <person name="Goh Y."/>
            <person name="Benson A."/>
            <person name="Baldwin K."/>
            <person name="Lee J.-H."/>
            <person name="Diaz-Muniz I."/>
            <person name="Dosti B."/>
            <person name="Smeianov V."/>
            <person name="Wechter W."/>
            <person name="Barabote R."/>
            <person name="Lorca G."/>
            <person name="Altermann E."/>
            <person name="Barrangou R."/>
            <person name="Ganesan B."/>
            <person name="Xie Y."/>
            <person name="Rawsthorne H."/>
            <person name="Tamir D."/>
            <person name="Parker C."/>
            <person name="Breidt F."/>
            <person name="Broadbent J.R."/>
            <person name="Hutkins R."/>
            <person name="O'Sullivan D."/>
            <person name="Steele J."/>
            <person name="Unlu G."/>
            <person name="Saier M.H. Jr."/>
            <person name="Klaenhammer T."/>
            <person name="Richardson P."/>
            <person name="Kozyavkin S."/>
            <person name="Weimer B.C."/>
            <person name="Mills D.A."/>
        </authorList>
    </citation>
    <scope>NUCLEOTIDE SEQUENCE [LARGE SCALE GENOMIC DNA]</scope>
    <source>
        <strain>ATCC BAA-331 / PSU-1</strain>
    </source>
</reference>
<evidence type="ECO:0000255" key="1">
    <source>
        <dbReference type="HAMAP-Rule" id="MF_01416"/>
    </source>
</evidence>
<protein>
    <recommendedName>
        <fullName evidence="1">ATP synthase subunit delta</fullName>
    </recommendedName>
    <alternativeName>
        <fullName evidence="1">ATP synthase F(1) sector subunit delta</fullName>
    </alternativeName>
    <alternativeName>
        <fullName evidence="1">F-type ATPase subunit delta</fullName>
        <shortName evidence="1">F-ATPase subunit delta</shortName>
    </alternativeName>
</protein>
<proteinExistence type="inferred from homology"/>